<name>EFP_CORGB</name>
<feature type="chain" id="PRO_1000010726" description="Elongation factor P">
    <location>
        <begin position="1"/>
        <end position="187"/>
    </location>
</feature>
<protein>
    <recommendedName>
        <fullName evidence="1">Elongation factor P</fullName>
        <shortName evidence="1">EF-P</shortName>
    </recommendedName>
</protein>
<gene>
    <name evidence="1" type="primary">efp</name>
    <name type="ordered locus">cgR_1668</name>
</gene>
<sequence>MATTADFKNGLVLKNEGKLQQIIEFQHVKPGKGPAFVRTKLKDVVTGKTIDKTWNAGVKVETATVDRRDVTYLYNDGTSFIVMDDKTFEQYELSPDAFGDAGRFLLENMRVQVSFHEGEALFGELPVSVDLRVEHTDPGLQGDRSTGGTKPATLETGAEIQVPLFIETGNVLKVDTRDGSYLSRVNN</sequence>
<organism>
    <name type="scientific">Corynebacterium glutamicum (strain R)</name>
    <dbReference type="NCBI Taxonomy" id="340322"/>
    <lineage>
        <taxon>Bacteria</taxon>
        <taxon>Bacillati</taxon>
        <taxon>Actinomycetota</taxon>
        <taxon>Actinomycetes</taxon>
        <taxon>Mycobacteriales</taxon>
        <taxon>Corynebacteriaceae</taxon>
        <taxon>Corynebacterium</taxon>
    </lineage>
</organism>
<proteinExistence type="inferred from homology"/>
<keyword id="KW-0963">Cytoplasm</keyword>
<keyword id="KW-0251">Elongation factor</keyword>
<keyword id="KW-0648">Protein biosynthesis</keyword>
<comment type="function">
    <text evidence="1">Involved in peptide bond synthesis. Stimulates efficient translation and peptide-bond synthesis on native or reconstituted 70S ribosomes in vitro. Probably functions indirectly by altering the affinity of the ribosome for aminoacyl-tRNA, thus increasing their reactivity as acceptors for peptidyl transferase.</text>
</comment>
<comment type="pathway">
    <text evidence="1">Protein biosynthesis; polypeptide chain elongation.</text>
</comment>
<comment type="subcellular location">
    <subcellularLocation>
        <location evidence="1">Cytoplasm</location>
    </subcellularLocation>
</comment>
<comment type="similarity">
    <text evidence="1">Belongs to the elongation factor P family.</text>
</comment>
<evidence type="ECO:0000255" key="1">
    <source>
        <dbReference type="HAMAP-Rule" id="MF_00141"/>
    </source>
</evidence>
<accession>A4QEJ4</accession>
<reference key="1">
    <citation type="journal article" date="2007" name="Microbiology">
        <title>Comparative analysis of the Corynebacterium glutamicum group and complete genome sequence of strain R.</title>
        <authorList>
            <person name="Yukawa H."/>
            <person name="Omumasaba C.A."/>
            <person name="Nonaka H."/>
            <person name="Kos P."/>
            <person name="Okai N."/>
            <person name="Suzuki N."/>
            <person name="Suda M."/>
            <person name="Tsuge Y."/>
            <person name="Watanabe J."/>
            <person name="Ikeda Y."/>
            <person name="Vertes A.A."/>
            <person name="Inui M."/>
        </authorList>
    </citation>
    <scope>NUCLEOTIDE SEQUENCE [LARGE SCALE GENOMIC DNA]</scope>
    <source>
        <strain>R</strain>
    </source>
</reference>
<dbReference type="EMBL" id="AP009044">
    <property type="protein sequence ID" value="BAF54660.1"/>
    <property type="molecule type" value="Genomic_DNA"/>
</dbReference>
<dbReference type="RefSeq" id="WP_003855973.1">
    <property type="nucleotide sequence ID" value="NC_009342.1"/>
</dbReference>
<dbReference type="SMR" id="A4QEJ4"/>
<dbReference type="GeneID" id="1019588"/>
<dbReference type="KEGG" id="cgt:cgR_1668"/>
<dbReference type="HOGENOM" id="CLU_074944_0_1_11"/>
<dbReference type="PhylomeDB" id="A4QEJ4"/>
<dbReference type="UniPathway" id="UPA00345"/>
<dbReference type="Proteomes" id="UP000006698">
    <property type="component" value="Chromosome"/>
</dbReference>
<dbReference type="GO" id="GO:0005737">
    <property type="term" value="C:cytoplasm"/>
    <property type="evidence" value="ECO:0007669"/>
    <property type="project" value="UniProtKB-SubCell"/>
</dbReference>
<dbReference type="GO" id="GO:0003746">
    <property type="term" value="F:translation elongation factor activity"/>
    <property type="evidence" value="ECO:0007669"/>
    <property type="project" value="UniProtKB-UniRule"/>
</dbReference>
<dbReference type="GO" id="GO:0043043">
    <property type="term" value="P:peptide biosynthetic process"/>
    <property type="evidence" value="ECO:0007669"/>
    <property type="project" value="InterPro"/>
</dbReference>
<dbReference type="CDD" id="cd04470">
    <property type="entry name" value="S1_EF-P_repeat_1"/>
    <property type="match status" value="1"/>
</dbReference>
<dbReference type="CDD" id="cd05794">
    <property type="entry name" value="S1_EF-P_repeat_2"/>
    <property type="match status" value="1"/>
</dbReference>
<dbReference type="FunFam" id="2.30.30.30:FF:000003">
    <property type="entry name" value="Elongation factor P"/>
    <property type="match status" value="1"/>
</dbReference>
<dbReference type="FunFam" id="2.40.50.140:FF:000004">
    <property type="entry name" value="Elongation factor P"/>
    <property type="match status" value="1"/>
</dbReference>
<dbReference type="FunFam" id="2.40.50.140:FF:000009">
    <property type="entry name" value="Elongation factor P"/>
    <property type="match status" value="1"/>
</dbReference>
<dbReference type="Gene3D" id="2.30.30.30">
    <property type="match status" value="1"/>
</dbReference>
<dbReference type="Gene3D" id="2.40.50.140">
    <property type="entry name" value="Nucleic acid-binding proteins"/>
    <property type="match status" value="2"/>
</dbReference>
<dbReference type="HAMAP" id="MF_00141">
    <property type="entry name" value="EF_P"/>
    <property type="match status" value="1"/>
</dbReference>
<dbReference type="InterPro" id="IPR015365">
    <property type="entry name" value="Elong-fact-P_C"/>
</dbReference>
<dbReference type="InterPro" id="IPR012340">
    <property type="entry name" value="NA-bd_OB-fold"/>
</dbReference>
<dbReference type="InterPro" id="IPR014722">
    <property type="entry name" value="Rib_uL2_dom2"/>
</dbReference>
<dbReference type="InterPro" id="IPR020599">
    <property type="entry name" value="Transl_elong_fac_P/YeiP"/>
</dbReference>
<dbReference type="InterPro" id="IPR013185">
    <property type="entry name" value="Transl_elong_KOW-like"/>
</dbReference>
<dbReference type="InterPro" id="IPR001059">
    <property type="entry name" value="Transl_elong_P/YeiP_cen"/>
</dbReference>
<dbReference type="InterPro" id="IPR013852">
    <property type="entry name" value="Transl_elong_P/YeiP_CS"/>
</dbReference>
<dbReference type="InterPro" id="IPR011768">
    <property type="entry name" value="Transl_elongation_fac_P"/>
</dbReference>
<dbReference type="InterPro" id="IPR008991">
    <property type="entry name" value="Translation_prot_SH3-like_sf"/>
</dbReference>
<dbReference type="NCBIfam" id="TIGR00038">
    <property type="entry name" value="efp"/>
    <property type="match status" value="1"/>
</dbReference>
<dbReference type="NCBIfam" id="NF001810">
    <property type="entry name" value="PRK00529.1"/>
    <property type="match status" value="1"/>
</dbReference>
<dbReference type="PANTHER" id="PTHR30053">
    <property type="entry name" value="ELONGATION FACTOR P"/>
    <property type="match status" value="1"/>
</dbReference>
<dbReference type="PANTHER" id="PTHR30053:SF12">
    <property type="entry name" value="ELONGATION FACTOR P (EF-P) FAMILY PROTEIN"/>
    <property type="match status" value="1"/>
</dbReference>
<dbReference type="Pfam" id="PF01132">
    <property type="entry name" value="EFP"/>
    <property type="match status" value="1"/>
</dbReference>
<dbReference type="Pfam" id="PF08207">
    <property type="entry name" value="EFP_N"/>
    <property type="match status" value="1"/>
</dbReference>
<dbReference type="Pfam" id="PF09285">
    <property type="entry name" value="Elong-fact-P_C"/>
    <property type="match status" value="1"/>
</dbReference>
<dbReference type="PIRSF" id="PIRSF005901">
    <property type="entry name" value="EF-P"/>
    <property type="match status" value="1"/>
</dbReference>
<dbReference type="SMART" id="SM01185">
    <property type="entry name" value="EFP"/>
    <property type="match status" value="1"/>
</dbReference>
<dbReference type="SMART" id="SM00841">
    <property type="entry name" value="Elong-fact-P_C"/>
    <property type="match status" value="1"/>
</dbReference>
<dbReference type="SUPFAM" id="SSF50249">
    <property type="entry name" value="Nucleic acid-binding proteins"/>
    <property type="match status" value="2"/>
</dbReference>
<dbReference type="SUPFAM" id="SSF50104">
    <property type="entry name" value="Translation proteins SH3-like domain"/>
    <property type="match status" value="1"/>
</dbReference>
<dbReference type="PROSITE" id="PS01275">
    <property type="entry name" value="EFP"/>
    <property type="match status" value="1"/>
</dbReference>